<gene>
    <name evidence="1" type="primary">aroH</name>
    <name evidence="5" type="synonym">aroG</name>
</gene>
<sequence>MVRGIRGAITVEEDTPEAIHQATRELLLKMLEANGIQSYEELAAVIFTVTEDLTSAFPAEAARQIGMHRVPLLSAREVPVPGSLPRVIRVLALWNTDTPQDRVRHVYLREAVRLRPDLESAQ</sequence>
<dbReference type="EC" id="5.4.99.5" evidence="3"/>
<dbReference type="EMBL" id="AY196198">
    <property type="protein sequence ID" value="AAO40746.1"/>
    <property type="molecule type" value="Genomic_DNA"/>
</dbReference>
<dbReference type="RefSeq" id="WP_011172959.1">
    <property type="nucleotide sequence ID" value="NZ_VHHQ01000003.1"/>
</dbReference>
<dbReference type="PDB" id="1ODE">
    <property type="method" value="X-ray"/>
    <property type="resolution" value="1.65 A"/>
    <property type="chains" value="A/B/C=1-122"/>
</dbReference>
<dbReference type="PDB" id="1UFY">
    <property type="method" value="X-ray"/>
    <property type="resolution" value="0.96 A"/>
    <property type="chains" value="A=1-122"/>
</dbReference>
<dbReference type="PDB" id="1UI9">
    <property type="method" value="X-ray"/>
    <property type="resolution" value="1.65 A"/>
    <property type="chains" value="A=1-122"/>
</dbReference>
<dbReference type="PDBsum" id="1ODE"/>
<dbReference type="PDBsum" id="1UFY"/>
<dbReference type="PDBsum" id="1UI9"/>
<dbReference type="SMR" id="Q84FH6"/>
<dbReference type="DrugBank" id="DB03814">
    <property type="generic name" value="2-(N-morpholino)ethanesulfonic acid"/>
</dbReference>
<dbReference type="DrugBank" id="DB02201">
    <property type="generic name" value="Malonate Ion"/>
</dbReference>
<dbReference type="GeneID" id="3169087"/>
<dbReference type="OMA" id="CIRVMMT"/>
<dbReference type="BRENDA" id="5.4.99.5">
    <property type="organism ID" value="2305"/>
</dbReference>
<dbReference type="UniPathway" id="UPA00120">
    <property type="reaction ID" value="UER00203"/>
</dbReference>
<dbReference type="EvolutionaryTrace" id="Q84FH6"/>
<dbReference type="GO" id="GO:0005737">
    <property type="term" value="C:cytoplasm"/>
    <property type="evidence" value="ECO:0007669"/>
    <property type="project" value="UniProtKB-SubCell"/>
</dbReference>
<dbReference type="GO" id="GO:0004106">
    <property type="term" value="F:chorismate mutase activity"/>
    <property type="evidence" value="ECO:0000314"/>
    <property type="project" value="UniProtKB"/>
</dbReference>
<dbReference type="GO" id="GO:0008652">
    <property type="term" value="P:amino acid biosynthetic process"/>
    <property type="evidence" value="ECO:0007669"/>
    <property type="project" value="UniProtKB-KW"/>
</dbReference>
<dbReference type="GO" id="GO:0009073">
    <property type="term" value="P:aromatic amino acid family biosynthetic process"/>
    <property type="evidence" value="ECO:0007669"/>
    <property type="project" value="UniProtKB-KW"/>
</dbReference>
<dbReference type="GO" id="GO:0046417">
    <property type="term" value="P:chorismate metabolic process"/>
    <property type="evidence" value="ECO:0000314"/>
    <property type="project" value="UniProtKB"/>
</dbReference>
<dbReference type="CDD" id="cd02185">
    <property type="entry name" value="AroH"/>
    <property type="match status" value="1"/>
</dbReference>
<dbReference type="FunFam" id="3.30.1330.40:FF:000014">
    <property type="entry name" value="Chorismate mutase AroH"/>
    <property type="match status" value="1"/>
</dbReference>
<dbReference type="Gene3D" id="3.30.1330.40">
    <property type="entry name" value="RutC-like"/>
    <property type="match status" value="1"/>
</dbReference>
<dbReference type="InterPro" id="IPR008243">
    <property type="entry name" value="Chorismate_mutase_AroH"/>
</dbReference>
<dbReference type="InterPro" id="IPR035959">
    <property type="entry name" value="RutC-like_sf"/>
</dbReference>
<dbReference type="NCBIfam" id="TIGR01796">
    <property type="entry name" value="CM_mono_aroH"/>
    <property type="match status" value="1"/>
</dbReference>
<dbReference type="PANTHER" id="PTHR21164">
    <property type="entry name" value="CHORISMATE MUTASE"/>
    <property type="match status" value="1"/>
</dbReference>
<dbReference type="PANTHER" id="PTHR21164:SF0">
    <property type="entry name" value="CHORISMATE MUTASE AROH"/>
    <property type="match status" value="1"/>
</dbReference>
<dbReference type="Pfam" id="PF07736">
    <property type="entry name" value="CM_1"/>
    <property type="match status" value="1"/>
</dbReference>
<dbReference type="PIRSF" id="PIRSF005965">
    <property type="entry name" value="Chor_mut_AroH"/>
    <property type="match status" value="1"/>
</dbReference>
<dbReference type="SUPFAM" id="SSF55298">
    <property type="entry name" value="YjgF-like"/>
    <property type="match status" value="1"/>
</dbReference>
<dbReference type="PROSITE" id="PS51167">
    <property type="entry name" value="CHORISMATE_MUT_1"/>
    <property type="match status" value="1"/>
</dbReference>
<keyword id="KW-0002">3D-structure</keyword>
<keyword id="KW-0028">Amino-acid biosynthesis</keyword>
<keyword id="KW-0057">Aromatic amino acid biosynthesis</keyword>
<keyword id="KW-0963">Cytoplasm</keyword>
<keyword id="KW-0413">Isomerase</keyword>
<reference key="1">
    <citation type="journal article" date="2004" name="Arch. Microbiol.">
        <title>Chorismate mutase of Thermus thermophilus is a monofunctional AroH class enzyme inhibited by tyrosine.</title>
        <authorList>
            <person name="Helmstaedt K."/>
            <person name="Heinrich G."/>
            <person name="Merkl R."/>
            <person name="Braus G.H."/>
        </authorList>
    </citation>
    <scope>NUCLEOTIDE SEQUENCE [GENOMIC DNA]</scope>
    <scope>FUNCTION AS A CHORISMATE MUTASE</scope>
    <scope>CATALYTIC ACTIVITY</scope>
    <scope>ACTIVITY REGULATION</scope>
    <scope>BIOPHYSICOCHEMICAL PROPERTIES</scope>
    <scope>SUBUNIT</scope>
    <source>
        <strain>HB27</strain>
    </source>
</reference>
<reference key="2">
    <citation type="submission" date="2003-06" db="PDB data bank">
        <title>The crystal structure of chorismate mutase from Thermus Thermophilus.</title>
        <authorList>
            <person name="Inagaki E."/>
            <person name="Kuramitsu S."/>
            <person name="Yokoyama S."/>
            <person name="Miyano M."/>
            <person name="Tahirov T.H."/>
        </authorList>
    </citation>
    <scope>X-RAY CRYSTALLOGRAPHY (0.96 ANGSTROMS)</scope>
    <scope>SUBUNIT</scope>
    <source>
        <strain>HB8</strain>
    </source>
</reference>
<protein>
    <recommendedName>
        <fullName>Chorismate mutase AroH</fullName>
        <ecNumber evidence="3">5.4.99.5</ecNumber>
    </recommendedName>
</protein>
<feature type="chain" id="PRO_0000414908" description="Chorismate mutase AroH">
    <location>
        <begin position="1"/>
        <end position="122"/>
    </location>
</feature>
<feature type="domain" description="Chorismate mutase aroH-type" evidence="2">
    <location>
        <begin position="2"/>
        <end position="120"/>
    </location>
</feature>
<feature type="binding site" evidence="1">
    <location>
        <position position="6"/>
    </location>
    <ligand>
        <name>prephenate</name>
        <dbReference type="ChEBI" id="CHEBI:29934"/>
    </ligand>
</feature>
<feature type="binding site" evidence="1">
    <location>
        <position position="89"/>
    </location>
    <ligand>
        <name>prephenate</name>
        <dbReference type="ChEBI" id="CHEBI:29934"/>
    </ligand>
</feature>
<feature type="binding site" evidence="1">
    <location>
        <position position="107"/>
    </location>
    <ligand>
        <name>prephenate</name>
        <dbReference type="ChEBI" id="CHEBI:29934"/>
    </ligand>
</feature>
<feature type="strand" evidence="7">
    <location>
        <begin position="2"/>
        <end position="10"/>
    </location>
</feature>
<feature type="strand" evidence="7">
    <location>
        <begin position="12"/>
        <end position="15"/>
    </location>
</feature>
<feature type="helix" evidence="7">
    <location>
        <begin position="16"/>
        <end position="33"/>
    </location>
</feature>
<feature type="helix" evidence="7">
    <location>
        <begin position="39"/>
        <end position="41"/>
    </location>
</feature>
<feature type="strand" evidence="7">
    <location>
        <begin position="42"/>
        <end position="49"/>
    </location>
</feature>
<feature type="helix" evidence="7">
    <location>
        <begin position="58"/>
        <end position="64"/>
    </location>
</feature>
<feature type="helix" evidence="7">
    <location>
        <begin position="67"/>
        <end position="69"/>
    </location>
</feature>
<feature type="strand" evidence="7">
    <location>
        <begin position="72"/>
        <end position="76"/>
    </location>
</feature>
<feature type="strand" evidence="7">
    <location>
        <begin position="85"/>
        <end position="95"/>
    </location>
</feature>
<feature type="helix" evidence="7">
    <location>
        <begin position="100"/>
        <end position="102"/>
    </location>
</feature>
<feature type="strand" evidence="7">
    <location>
        <begin position="106"/>
        <end position="108"/>
    </location>
</feature>
<feature type="helix" evidence="7">
    <location>
        <begin position="109"/>
        <end position="114"/>
    </location>
</feature>
<feature type="helix" evidence="7">
    <location>
        <begin position="116"/>
        <end position="118"/>
    </location>
</feature>
<accession>Q84FH6</accession>
<name>AROH_THETH</name>
<comment type="function">
    <text evidence="3">Catalyzes the Claisen rearrangement of chorismate to prephenate. Probably involved in the aromatic amino acid biosynthesis.</text>
</comment>
<comment type="catalytic activity">
    <reaction evidence="3">
        <text>chorismate = prephenate</text>
        <dbReference type="Rhea" id="RHEA:13897"/>
        <dbReference type="ChEBI" id="CHEBI:29748"/>
        <dbReference type="ChEBI" id="CHEBI:29934"/>
        <dbReference type="EC" id="5.4.99.5"/>
    </reaction>
    <physiologicalReaction direction="left-to-right" evidence="3">
        <dbReference type="Rhea" id="RHEA:13898"/>
    </physiologicalReaction>
</comment>
<comment type="activity regulation">
    <text evidence="3">Inhibited by 40% with 500 uM tyrosine, and a tyrosine concentration as high as 5 mM reduced activity to 5%.</text>
</comment>
<comment type="biophysicochemical properties">
    <kinetics>
        <KM evidence="3">290 uM for chorismate (at pH 7.6 and at 70 degrees Celsius)</KM>
        <Vmax evidence="3">198.0 umol/min/mg enzyme (at pH 7.6 and at 70 degrees Celsius)</Vmax>
    </kinetics>
    <temperatureDependence>
        <text evidence="3">Optimum temperature is 70 degrees Celsius.</text>
    </temperatureDependence>
</comment>
<comment type="pathway">
    <text>Metabolic intermediate biosynthesis; prephenate biosynthesis; prephenate from chorismate: step 1/1.</text>
</comment>
<comment type="subunit">
    <text evidence="3 4">Homotrimer.</text>
</comment>
<comment type="subcellular location">
    <subcellularLocation>
        <location evidence="6">Cytoplasm</location>
    </subcellularLocation>
</comment>
<proteinExistence type="evidence at protein level"/>
<organism>
    <name type="scientific">Thermus thermophilus</name>
    <dbReference type="NCBI Taxonomy" id="274"/>
    <lineage>
        <taxon>Bacteria</taxon>
        <taxon>Thermotogati</taxon>
        <taxon>Deinococcota</taxon>
        <taxon>Deinococci</taxon>
        <taxon>Thermales</taxon>
        <taxon>Thermaceae</taxon>
        <taxon>Thermus</taxon>
    </lineage>
</organism>
<evidence type="ECO:0000250" key="1">
    <source>
        <dbReference type="UniProtKB" id="P19080"/>
    </source>
</evidence>
<evidence type="ECO:0000255" key="2">
    <source>
        <dbReference type="PROSITE-ProRule" id="PRU00514"/>
    </source>
</evidence>
<evidence type="ECO:0000269" key="3">
    <source>
    </source>
</evidence>
<evidence type="ECO:0000269" key="4">
    <source ref="2"/>
</evidence>
<evidence type="ECO:0000303" key="5">
    <source>
    </source>
</evidence>
<evidence type="ECO:0000305" key="6"/>
<evidence type="ECO:0007829" key="7">
    <source>
        <dbReference type="PDB" id="1UFY"/>
    </source>
</evidence>